<keyword id="KW-0030">Aminoacyl-tRNA synthetase</keyword>
<keyword id="KW-0067">ATP-binding</keyword>
<keyword id="KW-0963">Cytoplasm</keyword>
<keyword id="KW-0436">Ligase</keyword>
<keyword id="KW-0547">Nucleotide-binding</keyword>
<keyword id="KW-0648">Protein biosynthesis</keyword>
<sequence>MKQSKMLIPTLREMPSDAQVISHALMVRAGYVRQVSAGIYAYLPLANRTIEKFKTIMRQEFEKIGAVEMLAPALLTADLWRESGRYETYGEDLYKLKNRDQSDFILGPTHEETFTTLVRDAVKSYKQLPLNLYQIQSKYRDEKRPRNGLLRTREFIMKDGYSFHKDYEDLDVTYEDYRKAYEAIFTRAGLDFKGIIGDGGAMGGKDSQEFMAVTPNRTDLNRWLVLDKTIPSIDDIPEDVLEEIKVELSAWLVSGEDTIAYSTESSYAANLEMATNEYKPSTKAATFEEVTRVETPNCKSIDEVAGFLSIDENQTIKTLLFIADEQPVVALLVGNDQVNDVKLKNYLAADFLEPASEEQAKEIFGAGFGSLGPVNLPDSVKIIADRKVQDLANAVSGANQDGYHFTGVNPERDFTAEYVDIREVKEGEISPDGKGTLKFARGIEIGHIFKLGTRYSDSMGANILDENGRSNPIVMGCYGIGVSRILSAVIEQHARLFVNKTPKGAYRFAWGINFPEELAPFDVHLITVNVKDQESQDLTEKIEADLMLKGYEVLTDDRNERVGSKFSDSDLIGLPIRVTVGKKASEGIVEVKIKASGDTIEVHADNLIETLEILTKK</sequence>
<comment type="function">
    <text evidence="1">Catalyzes the attachment of proline to tRNA(Pro) in a two-step reaction: proline is first activated by ATP to form Pro-AMP and then transferred to the acceptor end of tRNA(Pro). As ProRS can inadvertently accommodate and process non-cognate amino acids such as alanine and cysteine, to avoid such errors it has two additional distinct editing activities against alanine. One activity is designated as 'pretransfer' editing and involves the tRNA(Pro)-independent hydrolysis of activated Ala-AMP. The other activity is designated 'posttransfer' editing and involves deacylation of mischarged Ala-tRNA(Pro). The misacylated Cys-tRNA(Pro) is not edited by ProRS.</text>
</comment>
<comment type="catalytic activity">
    <reaction evidence="1">
        <text>tRNA(Pro) + L-proline + ATP = L-prolyl-tRNA(Pro) + AMP + diphosphate</text>
        <dbReference type="Rhea" id="RHEA:14305"/>
        <dbReference type="Rhea" id="RHEA-COMP:9700"/>
        <dbReference type="Rhea" id="RHEA-COMP:9702"/>
        <dbReference type="ChEBI" id="CHEBI:30616"/>
        <dbReference type="ChEBI" id="CHEBI:33019"/>
        <dbReference type="ChEBI" id="CHEBI:60039"/>
        <dbReference type="ChEBI" id="CHEBI:78442"/>
        <dbReference type="ChEBI" id="CHEBI:78532"/>
        <dbReference type="ChEBI" id="CHEBI:456215"/>
        <dbReference type="EC" id="6.1.1.15"/>
    </reaction>
</comment>
<comment type="subunit">
    <text evidence="1">Homodimer.</text>
</comment>
<comment type="subcellular location">
    <subcellularLocation>
        <location evidence="1">Cytoplasm</location>
    </subcellularLocation>
</comment>
<comment type="domain">
    <text evidence="1">Consists of three domains: the N-terminal catalytic domain, the editing domain and the C-terminal anticodon-binding domain.</text>
</comment>
<comment type="similarity">
    <text evidence="1">Belongs to the class-II aminoacyl-tRNA synthetase family. ProS type 1 subfamily.</text>
</comment>
<name>SYP_STRA3</name>
<gene>
    <name evidence="1" type="primary">proS</name>
    <name type="ordered locus">gbs1900</name>
</gene>
<feature type="chain" id="PRO_0000248774" description="Proline--tRNA ligase">
    <location>
        <begin position="1"/>
        <end position="617"/>
    </location>
</feature>
<reference key="1">
    <citation type="journal article" date="2002" name="Mol. Microbiol.">
        <title>Genome sequence of Streptococcus agalactiae, a pathogen causing invasive neonatal disease.</title>
        <authorList>
            <person name="Glaser P."/>
            <person name="Rusniok C."/>
            <person name="Buchrieser C."/>
            <person name="Chevalier F."/>
            <person name="Frangeul L."/>
            <person name="Msadek T."/>
            <person name="Zouine M."/>
            <person name="Couve E."/>
            <person name="Lalioui L."/>
            <person name="Poyart C."/>
            <person name="Trieu-Cuot P."/>
            <person name="Kunst F."/>
        </authorList>
    </citation>
    <scope>NUCLEOTIDE SEQUENCE [LARGE SCALE GENOMIC DNA]</scope>
    <source>
        <strain>NEM316</strain>
    </source>
</reference>
<dbReference type="EC" id="6.1.1.15" evidence="1"/>
<dbReference type="EMBL" id="AL766854">
    <property type="protein sequence ID" value="CAD47559.1"/>
    <property type="molecule type" value="Genomic_DNA"/>
</dbReference>
<dbReference type="SMR" id="Q8E362"/>
<dbReference type="KEGG" id="san:proS"/>
<dbReference type="eggNOG" id="COG0442">
    <property type="taxonomic scope" value="Bacteria"/>
</dbReference>
<dbReference type="HOGENOM" id="CLU_016739_0_0_9"/>
<dbReference type="Proteomes" id="UP000000823">
    <property type="component" value="Chromosome"/>
</dbReference>
<dbReference type="GO" id="GO:0005829">
    <property type="term" value="C:cytosol"/>
    <property type="evidence" value="ECO:0007669"/>
    <property type="project" value="TreeGrafter"/>
</dbReference>
<dbReference type="GO" id="GO:0002161">
    <property type="term" value="F:aminoacyl-tRNA deacylase activity"/>
    <property type="evidence" value="ECO:0007669"/>
    <property type="project" value="InterPro"/>
</dbReference>
<dbReference type="GO" id="GO:0005524">
    <property type="term" value="F:ATP binding"/>
    <property type="evidence" value="ECO:0007669"/>
    <property type="project" value="UniProtKB-UniRule"/>
</dbReference>
<dbReference type="GO" id="GO:0140096">
    <property type="term" value="F:catalytic activity, acting on a protein"/>
    <property type="evidence" value="ECO:0007669"/>
    <property type="project" value="UniProtKB-ARBA"/>
</dbReference>
<dbReference type="GO" id="GO:0004827">
    <property type="term" value="F:proline-tRNA ligase activity"/>
    <property type="evidence" value="ECO:0007669"/>
    <property type="project" value="UniProtKB-UniRule"/>
</dbReference>
<dbReference type="GO" id="GO:0016740">
    <property type="term" value="F:transferase activity"/>
    <property type="evidence" value="ECO:0007669"/>
    <property type="project" value="UniProtKB-ARBA"/>
</dbReference>
<dbReference type="GO" id="GO:0006433">
    <property type="term" value="P:prolyl-tRNA aminoacylation"/>
    <property type="evidence" value="ECO:0007669"/>
    <property type="project" value="UniProtKB-UniRule"/>
</dbReference>
<dbReference type="CDD" id="cd04334">
    <property type="entry name" value="ProRS-INS"/>
    <property type="match status" value="1"/>
</dbReference>
<dbReference type="CDD" id="cd00861">
    <property type="entry name" value="ProRS_anticodon_short"/>
    <property type="match status" value="1"/>
</dbReference>
<dbReference type="FunFam" id="3.40.50.800:FF:000011">
    <property type="entry name" value="Proline--tRNA ligase"/>
    <property type="match status" value="1"/>
</dbReference>
<dbReference type="Gene3D" id="3.40.50.800">
    <property type="entry name" value="Anticodon-binding domain"/>
    <property type="match status" value="1"/>
</dbReference>
<dbReference type="Gene3D" id="3.30.930.10">
    <property type="entry name" value="Bira Bifunctional Protein, Domain 2"/>
    <property type="match status" value="2"/>
</dbReference>
<dbReference type="Gene3D" id="3.90.960.10">
    <property type="entry name" value="YbaK/aminoacyl-tRNA synthetase-associated domain"/>
    <property type="match status" value="1"/>
</dbReference>
<dbReference type="HAMAP" id="MF_01569">
    <property type="entry name" value="Pro_tRNA_synth_type1"/>
    <property type="match status" value="1"/>
</dbReference>
<dbReference type="InterPro" id="IPR002314">
    <property type="entry name" value="aa-tRNA-synt_IIb"/>
</dbReference>
<dbReference type="InterPro" id="IPR006195">
    <property type="entry name" value="aa-tRNA-synth_II"/>
</dbReference>
<dbReference type="InterPro" id="IPR045864">
    <property type="entry name" value="aa-tRNA-synth_II/BPL/LPL"/>
</dbReference>
<dbReference type="InterPro" id="IPR004154">
    <property type="entry name" value="Anticodon-bd"/>
</dbReference>
<dbReference type="InterPro" id="IPR036621">
    <property type="entry name" value="Anticodon-bd_dom_sf"/>
</dbReference>
<dbReference type="InterPro" id="IPR002316">
    <property type="entry name" value="Pro-tRNA-ligase_IIa"/>
</dbReference>
<dbReference type="InterPro" id="IPR004500">
    <property type="entry name" value="Pro-tRNA-synth_IIa_bac-type"/>
</dbReference>
<dbReference type="InterPro" id="IPR023717">
    <property type="entry name" value="Pro-tRNA-Synthase_IIa_type1"/>
</dbReference>
<dbReference type="InterPro" id="IPR050062">
    <property type="entry name" value="Pro-tRNA_synthetase"/>
</dbReference>
<dbReference type="InterPro" id="IPR044140">
    <property type="entry name" value="ProRS_anticodon_short"/>
</dbReference>
<dbReference type="InterPro" id="IPR036754">
    <property type="entry name" value="YbaK/aa-tRNA-synt-asso_dom_sf"/>
</dbReference>
<dbReference type="InterPro" id="IPR007214">
    <property type="entry name" value="YbaK/aa-tRNA-synth-assoc-dom"/>
</dbReference>
<dbReference type="NCBIfam" id="NF006625">
    <property type="entry name" value="PRK09194.1"/>
    <property type="match status" value="1"/>
</dbReference>
<dbReference type="NCBIfam" id="TIGR00409">
    <property type="entry name" value="proS_fam_II"/>
    <property type="match status" value="2"/>
</dbReference>
<dbReference type="PANTHER" id="PTHR42753">
    <property type="entry name" value="MITOCHONDRIAL RIBOSOME PROTEIN L39/PROLYL-TRNA LIGASE FAMILY MEMBER"/>
    <property type="match status" value="1"/>
</dbReference>
<dbReference type="PANTHER" id="PTHR42753:SF2">
    <property type="entry name" value="PROLINE--TRNA LIGASE"/>
    <property type="match status" value="1"/>
</dbReference>
<dbReference type="Pfam" id="PF03129">
    <property type="entry name" value="HGTP_anticodon"/>
    <property type="match status" value="1"/>
</dbReference>
<dbReference type="Pfam" id="PF00587">
    <property type="entry name" value="tRNA-synt_2b"/>
    <property type="match status" value="1"/>
</dbReference>
<dbReference type="Pfam" id="PF04073">
    <property type="entry name" value="tRNA_edit"/>
    <property type="match status" value="1"/>
</dbReference>
<dbReference type="PRINTS" id="PR01046">
    <property type="entry name" value="TRNASYNTHPRO"/>
</dbReference>
<dbReference type="SUPFAM" id="SSF52954">
    <property type="entry name" value="Class II aaRS ABD-related"/>
    <property type="match status" value="1"/>
</dbReference>
<dbReference type="SUPFAM" id="SSF55681">
    <property type="entry name" value="Class II aaRS and biotin synthetases"/>
    <property type="match status" value="1"/>
</dbReference>
<dbReference type="SUPFAM" id="SSF55826">
    <property type="entry name" value="YbaK/ProRS associated domain"/>
    <property type="match status" value="1"/>
</dbReference>
<dbReference type="PROSITE" id="PS50862">
    <property type="entry name" value="AA_TRNA_LIGASE_II"/>
    <property type="match status" value="1"/>
</dbReference>
<evidence type="ECO:0000255" key="1">
    <source>
        <dbReference type="HAMAP-Rule" id="MF_01569"/>
    </source>
</evidence>
<protein>
    <recommendedName>
        <fullName evidence="1">Proline--tRNA ligase</fullName>
        <ecNumber evidence="1">6.1.1.15</ecNumber>
    </recommendedName>
    <alternativeName>
        <fullName evidence="1">Prolyl-tRNA synthetase</fullName>
        <shortName evidence="1">ProRS</shortName>
    </alternativeName>
</protein>
<accession>Q8E362</accession>
<proteinExistence type="inferred from homology"/>
<organism>
    <name type="scientific">Streptococcus agalactiae serotype III (strain NEM316)</name>
    <dbReference type="NCBI Taxonomy" id="211110"/>
    <lineage>
        <taxon>Bacteria</taxon>
        <taxon>Bacillati</taxon>
        <taxon>Bacillota</taxon>
        <taxon>Bacilli</taxon>
        <taxon>Lactobacillales</taxon>
        <taxon>Streptococcaceae</taxon>
        <taxon>Streptococcus</taxon>
    </lineage>
</organism>